<gene>
    <name evidence="23" type="primary">PPID</name>
    <name type="synonym">CYP40</name>
    <name type="synonym">CYPD</name>
</gene>
<name>PPID_HUMAN</name>
<reference key="1">
    <citation type="journal article" date="1993" name="J. Biol. Chem.">
        <title>Cyclophilin-40, a protein with homology to the P59 component of the steroid receptor complex. Cloning of the cDNA and further characterization.</title>
        <authorList>
            <person name="Kieffer L.J."/>
            <person name="Seng T.W."/>
            <person name="Li W."/>
            <person name="Osterman D.G."/>
            <person name="Handschumacher R.E."/>
            <person name="Bayney R.M."/>
        </authorList>
    </citation>
    <scope>NUCLEOTIDE SEQUENCE [MRNA]</scope>
    <scope>PARTIAL PROTEIN SEQUENCE</scope>
    <source>
        <tissue>Pancreas</tissue>
    </source>
</reference>
<reference key="2">
    <citation type="journal article" date="1996" name="Genomics">
        <title>The structure and complete nucleotide sequence of the human cyclophilin 40 (PPID) gene.</title>
        <authorList>
            <person name="Yokoi H."/>
            <person name="Shimizu Y."/>
            <person name="Anazawa H."/>
            <person name="Lefebvre C.A."/>
            <person name="Korneluk R.G."/>
            <person name="Ikeda J.E."/>
        </authorList>
    </citation>
    <scope>NUCLEOTIDE SEQUENCE [GENOMIC DNA]</scope>
    <source>
        <tissue>Placenta</tissue>
    </source>
</reference>
<reference key="3">
    <citation type="submission" date="2004-08" db="EMBL/GenBank/DDBJ databases">
        <authorList>
            <consortium name="NIEHS SNPs program"/>
        </authorList>
    </citation>
    <scope>NUCLEOTIDE SEQUENCE [GENOMIC DNA]</scope>
    <scope>VARIANTS CYS-49; ILE-302 AND GLU-335</scope>
</reference>
<reference key="4">
    <citation type="journal article" date="2004" name="Nat. Genet.">
        <title>Complete sequencing and characterization of 21,243 full-length human cDNAs.</title>
        <authorList>
            <person name="Ota T."/>
            <person name="Suzuki Y."/>
            <person name="Nishikawa T."/>
            <person name="Otsuki T."/>
            <person name="Sugiyama T."/>
            <person name="Irie R."/>
            <person name="Wakamatsu A."/>
            <person name="Hayashi K."/>
            <person name="Sato H."/>
            <person name="Nagai K."/>
            <person name="Kimura K."/>
            <person name="Makita H."/>
            <person name="Sekine M."/>
            <person name="Obayashi M."/>
            <person name="Nishi T."/>
            <person name="Shibahara T."/>
            <person name="Tanaka T."/>
            <person name="Ishii S."/>
            <person name="Yamamoto J."/>
            <person name="Saito K."/>
            <person name="Kawai Y."/>
            <person name="Isono Y."/>
            <person name="Nakamura Y."/>
            <person name="Nagahari K."/>
            <person name="Murakami K."/>
            <person name="Yasuda T."/>
            <person name="Iwayanagi T."/>
            <person name="Wagatsuma M."/>
            <person name="Shiratori A."/>
            <person name="Sudo H."/>
            <person name="Hosoiri T."/>
            <person name="Kaku Y."/>
            <person name="Kodaira H."/>
            <person name="Kondo H."/>
            <person name="Sugawara M."/>
            <person name="Takahashi M."/>
            <person name="Kanda K."/>
            <person name="Yokoi T."/>
            <person name="Furuya T."/>
            <person name="Kikkawa E."/>
            <person name="Omura Y."/>
            <person name="Abe K."/>
            <person name="Kamihara K."/>
            <person name="Katsuta N."/>
            <person name="Sato K."/>
            <person name="Tanikawa M."/>
            <person name="Yamazaki M."/>
            <person name="Ninomiya K."/>
            <person name="Ishibashi T."/>
            <person name="Yamashita H."/>
            <person name="Murakawa K."/>
            <person name="Fujimori K."/>
            <person name="Tanai H."/>
            <person name="Kimata M."/>
            <person name="Watanabe M."/>
            <person name="Hiraoka S."/>
            <person name="Chiba Y."/>
            <person name="Ishida S."/>
            <person name="Ono Y."/>
            <person name="Takiguchi S."/>
            <person name="Watanabe S."/>
            <person name="Yosida M."/>
            <person name="Hotuta T."/>
            <person name="Kusano J."/>
            <person name="Kanehori K."/>
            <person name="Takahashi-Fujii A."/>
            <person name="Hara H."/>
            <person name="Tanase T.-O."/>
            <person name="Nomura Y."/>
            <person name="Togiya S."/>
            <person name="Komai F."/>
            <person name="Hara R."/>
            <person name="Takeuchi K."/>
            <person name="Arita M."/>
            <person name="Imose N."/>
            <person name="Musashino K."/>
            <person name="Yuuki H."/>
            <person name="Oshima A."/>
            <person name="Sasaki N."/>
            <person name="Aotsuka S."/>
            <person name="Yoshikawa Y."/>
            <person name="Matsunawa H."/>
            <person name="Ichihara T."/>
            <person name="Shiohata N."/>
            <person name="Sano S."/>
            <person name="Moriya S."/>
            <person name="Momiyama H."/>
            <person name="Satoh N."/>
            <person name="Takami S."/>
            <person name="Terashima Y."/>
            <person name="Suzuki O."/>
            <person name="Nakagawa S."/>
            <person name="Senoh A."/>
            <person name="Mizoguchi H."/>
            <person name="Goto Y."/>
            <person name="Shimizu F."/>
            <person name="Wakebe H."/>
            <person name="Hishigaki H."/>
            <person name="Watanabe T."/>
            <person name="Sugiyama A."/>
            <person name="Takemoto M."/>
            <person name="Kawakami B."/>
            <person name="Yamazaki M."/>
            <person name="Watanabe K."/>
            <person name="Kumagai A."/>
            <person name="Itakura S."/>
            <person name="Fukuzumi Y."/>
            <person name="Fujimori Y."/>
            <person name="Komiyama M."/>
            <person name="Tashiro H."/>
            <person name="Tanigami A."/>
            <person name="Fujiwara T."/>
            <person name="Ono T."/>
            <person name="Yamada K."/>
            <person name="Fujii Y."/>
            <person name="Ozaki K."/>
            <person name="Hirao M."/>
            <person name="Ohmori Y."/>
            <person name="Kawabata A."/>
            <person name="Hikiji T."/>
            <person name="Kobatake N."/>
            <person name="Inagaki H."/>
            <person name="Ikema Y."/>
            <person name="Okamoto S."/>
            <person name="Okitani R."/>
            <person name="Kawakami T."/>
            <person name="Noguchi S."/>
            <person name="Itoh T."/>
            <person name="Shigeta K."/>
            <person name="Senba T."/>
            <person name="Matsumura K."/>
            <person name="Nakajima Y."/>
            <person name="Mizuno T."/>
            <person name="Morinaga M."/>
            <person name="Sasaki M."/>
            <person name="Togashi T."/>
            <person name="Oyama M."/>
            <person name="Hata H."/>
            <person name="Watanabe M."/>
            <person name="Komatsu T."/>
            <person name="Mizushima-Sugano J."/>
            <person name="Satoh T."/>
            <person name="Shirai Y."/>
            <person name="Takahashi Y."/>
            <person name="Nakagawa K."/>
            <person name="Okumura K."/>
            <person name="Nagase T."/>
            <person name="Nomura N."/>
            <person name="Kikuchi H."/>
            <person name="Masuho Y."/>
            <person name="Yamashita R."/>
            <person name="Nakai K."/>
            <person name="Yada T."/>
            <person name="Nakamura Y."/>
            <person name="Ohara O."/>
            <person name="Isogai T."/>
            <person name="Sugano S."/>
        </authorList>
    </citation>
    <scope>NUCLEOTIDE SEQUENCE [LARGE SCALE MRNA]</scope>
</reference>
<reference key="5">
    <citation type="submission" date="2005-09" db="EMBL/GenBank/DDBJ databases">
        <authorList>
            <person name="Mural R.J."/>
            <person name="Istrail S."/>
            <person name="Sutton G.G."/>
            <person name="Florea L."/>
            <person name="Halpern A.L."/>
            <person name="Mobarry C.M."/>
            <person name="Lippert R."/>
            <person name="Walenz B."/>
            <person name="Shatkay H."/>
            <person name="Dew I."/>
            <person name="Miller J.R."/>
            <person name="Flanigan M.J."/>
            <person name="Edwards N.J."/>
            <person name="Bolanos R."/>
            <person name="Fasulo D."/>
            <person name="Halldorsson B.V."/>
            <person name="Hannenhalli S."/>
            <person name="Turner R."/>
            <person name="Yooseph S."/>
            <person name="Lu F."/>
            <person name="Nusskern D.R."/>
            <person name="Shue B.C."/>
            <person name="Zheng X.H."/>
            <person name="Zhong F."/>
            <person name="Delcher A.L."/>
            <person name="Huson D.H."/>
            <person name="Kravitz S.A."/>
            <person name="Mouchard L."/>
            <person name="Reinert K."/>
            <person name="Remington K.A."/>
            <person name="Clark A.G."/>
            <person name="Waterman M.S."/>
            <person name="Eichler E.E."/>
            <person name="Adams M.D."/>
            <person name="Hunkapiller M.W."/>
            <person name="Myers E.W."/>
            <person name="Venter J.C."/>
        </authorList>
    </citation>
    <scope>NUCLEOTIDE SEQUENCE [LARGE SCALE GENOMIC DNA]</scope>
</reference>
<reference key="6">
    <citation type="journal article" date="2004" name="Genome Res.">
        <title>The status, quality, and expansion of the NIH full-length cDNA project: the Mammalian Gene Collection (MGC).</title>
        <authorList>
            <consortium name="The MGC Project Team"/>
        </authorList>
    </citation>
    <scope>NUCLEOTIDE SEQUENCE [LARGE SCALE MRNA]</scope>
    <source>
        <tissue>Brain</tissue>
    </source>
</reference>
<reference key="7">
    <citation type="journal article" date="2003" name="Nat. Biotechnol.">
        <title>Exploring proteomes and analyzing protein processing by mass spectrometric identification of sorted N-terminal peptides.</title>
        <authorList>
            <person name="Gevaert K."/>
            <person name="Goethals M."/>
            <person name="Martens L."/>
            <person name="Van Damme J."/>
            <person name="Staes A."/>
            <person name="Thomas G.R."/>
            <person name="Vandekerckhove J."/>
        </authorList>
    </citation>
    <scope>PROTEIN SEQUENCE OF 2-17</scope>
    <source>
        <tissue>Platelet</tissue>
    </source>
</reference>
<reference key="8">
    <citation type="journal article" date="1998" name="Mol. Cell">
        <title>Point mutations in v-Myb disrupt a cyclophilin-catalyzed negative regulatory mechanism.</title>
        <authorList>
            <person name="Leverson J.D."/>
            <person name="Ness S.A."/>
        </authorList>
    </citation>
    <scope>FUNCTION</scope>
    <scope>INTERACTION WITH MYB</scope>
</reference>
<reference key="9">
    <citation type="journal article" date="2001" name="Cell Stress Chaperones">
        <title>Human cyclophilin 40 is a heat shock protein that exhibits altered intracellular localization following heat shock.</title>
        <authorList>
            <person name="Mark P.J."/>
            <person name="Ward B.K."/>
            <person name="Kumar P."/>
            <person name="Lahooti H."/>
            <person name="Minchin R.F."/>
            <person name="Ratajczak T."/>
        </authorList>
    </citation>
    <scope>SUBCELLULAR LOCATION</scope>
</reference>
<reference key="10">
    <citation type="journal article" date="2001" name="J. Mol. Biol.">
        <title>Functional analysis of the Hsp90-associated human peptidyl prolyl cis/trans isomerases FKBP51, FKBP52 and Cyp40.</title>
        <authorList>
            <person name="Pirkl F."/>
            <person name="Buchner J."/>
        </authorList>
    </citation>
    <scope>CATALYTIC ACTIVITY</scope>
    <scope>FUNCTION</scope>
    <scope>SUBUNIT</scope>
</reference>
<reference key="11">
    <citation type="journal article" date="2002" name="J. Biol. Chem.">
        <title>A structure-based mutational analysis of cyclophilin 40 identifies key residues in the core tetratricopeptide repeat domain that mediate binding to Hsp90.</title>
        <authorList>
            <person name="Ward B.K."/>
            <person name="Allan R.K."/>
            <person name="Mok D."/>
            <person name="Temple S.E."/>
            <person name="Taylor P."/>
            <person name="Dornan J."/>
            <person name="Mark P.J."/>
            <person name="Shaw D.J."/>
            <person name="Kumar P."/>
            <person name="Walkinshaw M.D."/>
            <person name="Ratajczak T."/>
        </authorList>
    </citation>
    <scope>INTERACTION WITH HSP90AB1</scope>
    <scope>MUTAGENESIS OF LYS-227; ASN-231; PHE-234; SER-274; ASN-278; LEU-284; LYS-285; LYS-308; ARG-312 AND ASP-329</scope>
</reference>
<reference key="12">
    <citation type="journal article" date="2003" name="Biochemistry">
        <title>High affinity binding of Hsp90 is triggered by multiple discrete segments of its kinase clients.</title>
        <authorList>
            <person name="Scroggins B.T."/>
            <person name="Prince T."/>
            <person name="Shao J."/>
            <person name="Uma S."/>
            <person name="Huang W."/>
            <person name="Guo Y."/>
            <person name="Yun B.G."/>
            <person name="Hedman K."/>
            <person name="Matts R.L."/>
            <person name="Hartson S.D."/>
        </authorList>
    </citation>
    <scope>IDENTIFICATION IN HSP90 COMPLEXES</scope>
</reference>
<reference key="13">
    <citation type="journal article" date="2004" name="Cell Stress Chaperones">
        <title>Interaction of the Hsp90 cochaperone cyclophilin 40 with Hsc70.</title>
        <authorList>
            <person name="Carrello A."/>
            <person name="Allan R.K."/>
            <person name="Morgan S.L."/>
            <person name="Owen B.A."/>
            <person name="Mok D."/>
            <person name="Ward B.K."/>
            <person name="Minchin R.F."/>
            <person name="Toft D.O."/>
            <person name="Ratajczak T."/>
        </authorList>
    </citation>
    <scope>INTERACTION WITH HSPA8</scope>
    <scope>MUTAGENESIS OF LYS-227; ASN-231; PHE-234; SER-274; ASN-278; LEU-284; LYS-285; LYS-308 AND ARG-312</scope>
</reference>
<reference key="14">
    <citation type="journal article" date="2008" name="FEBS Lett.">
        <title>Cyclophilin-40 has a cellular role in the aryl hydrocarbon receptor signaling.</title>
        <authorList>
            <person name="Luu T.C."/>
            <person name="Bhattacharya P."/>
            <person name="Chan W.K."/>
        </authorList>
    </citation>
    <scope>FUNCTION</scope>
    <scope>SUBCELLULAR LOCATION</scope>
</reference>
<reference key="15">
    <citation type="journal article" date="2008" name="Proc. Natl. Acad. Sci. U.S.A.">
        <title>A quantitative atlas of mitotic phosphorylation.</title>
        <authorList>
            <person name="Dephoure N."/>
            <person name="Zhou C."/>
            <person name="Villen J."/>
            <person name="Beausoleil S.A."/>
            <person name="Bakalarski C.E."/>
            <person name="Elledge S.J."/>
            <person name="Gygi S.P."/>
        </authorList>
    </citation>
    <scope>PHOSPHORYLATION [LARGE SCALE ANALYSIS] AT SER-198</scope>
    <scope>IDENTIFICATION BY MASS SPECTROMETRY [LARGE SCALE ANALYSIS]</scope>
    <source>
        <tissue>Cervix carcinoma</tissue>
    </source>
</reference>
<reference key="16">
    <citation type="journal article" date="2009" name="Sci. Signal.">
        <title>Quantitative phosphoproteomic analysis of T cell receptor signaling reveals system-wide modulation of protein-protein interactions.</title>
        <authorList>
            <person name="Mayya V."/>
            <person name="Lundgren D.H."/>
            <person name="Hwang S.-I."/>
            <person name="Rezaul K."/>
            <person name="Wu L."/>
            <person name="Eng J.K."/>
            <person name="Rodionov V."/>
            <person name="Han D.K."/>
        </authorList>
    </citation>
    <scope>PHOSPHORYLATION [LARGE SCALE ANALYSIS] AT SER-198</scope>
    <scope>IDENTIFICATION BY MASS SPECTROMETRY [LARGE SCALE ANALYSIS]</scope>
    <source>
        <tissue>Leukemic T-cell</tissue>
    </source>
</reference>
<reference key="17">
    <citation type="journal article" date="2010" name="PLoS Biol.">
        <title>Structural and biochemical characterization of the human cyclophilin family of peptidyl-prolyl isomerases.</title>
        <authorList>
            <person name="Davis T.L."/>
            <person name="Walker J.R."/>
            <person name="Campagna-Slater V."/>
            <person name="Finerty P.J."/>
            <person name="Paramanathan R."/>
            <person name="Bernstein G."/>
            <person name="MacKenzie F."/>
            <person name="Tempel W."/>
            <person name="Ouyang H."/>
            <person name="Lee W.H."/>
            <person name="Eisenmesser E.Z."/>
            <person name="Dhe-Paganon S."/>
        </authorList>
    </citation>
    <scope>FUNCTION</scope>
    <scope>CATALYTIC ACTIVITY</scope>
    <scope>ACTIVITY REGULATION</scope>
</reference>
<reference key="18">
    <citation type="journal article" date="2010" name="Virology">
        <title>Multiple cyclophilins involved in different cellular pathways mediate HCV replication.</title>
        <authorList>
            <person name="Gaither L.A."/>
            <person name="Borawski J."/>
            <person name="Anderson L.J."/>
            <person name="Balabanis K.A."/>
            <person name="Devay P."/>
            <person name="Joberty G."/>
            <person name="Rau C."/>
            <person name="Schirle M."/>
            <person name="Bouwmeester T."/>
            <person name="Mickanin C."/>
            <person name="Zhao S."/>
            <person name="Vickers C."/>
            <person name="Lee L."/>
            <person name="Deng G."/>
            <person name="Baryza J."/>
            <person name="Fujimoto R.A."/>
            <person name="Lin K."/>
            <person name="Compton T."/>
            <person name="Wiedmann B."/>
        </authorList>
    </citation>
    <scope>FUNCTION (MICROBIAL INFECTION)</scope>
</reference>
<reference key="19">
    <citation type="journal article" date="2011" name="Anal. Biochem.">
        <title>Identification of cyclophilin-40-interacting proteins reveals potential cellular function of cyclophilin-40.</title>
        <authorList>
            <person name="Park M.S."/>
            <person name="Chu F."/>
            <person name="Xie J."/>
            <person name="Wang Y."/>
            <person name="Bhattacharya P."/>
            <person name="Chan W.K."/>
        </authorList>
    </citation>
    <scope>INTERACTION WITH ILF2; XRCC6; RACK1 AND RPS3</scope>
</reference>
<reference key="20">
    <citation type="journal article" date="2011" name="BMC Syst. Biol.">
        <title>Initial characterization of the human central proteome.</title>
        <authorList>
            <person name="Burkard T.R."/>
            <person name="Planyavsky M."/>
            <person name="Kaupe I."/>
            <person name="Breitwieser F.P."/>
            <person name="Buerckstuemmer T."/>
            <person name="Bennett K.L."/>
            <person name="Superti-Furga G."/>
            <person name="Colinge J."/>
        </authorList>
    </citation>
    <scope>IDENTIFICATION BY MASS SPECTROMETRY [LARGE SCALE ANALYSIS]</scope>
</reference>
<reference key="21">
    <citation type="journal article" date="2011" name="Virol. J.">
        <title>Inhibition of cyclophilins alters lipid trafficking and blocks hepatitis C virus secretion.</title>
        <authorList>
            <person name="Anderson L.J."/>
            <person name="Lin K."/>
            <person name="Compton T."/>
            <person name="Wiedmann B."/>
        </authorList>
    </citation>
    <scope>FUNCTION (MICROBIAL INFECTION)</scope>
</reference>
<reference key="22">
    <citation type="journal article" date="2012" name="BMC Cancer">
        <title>The heat shock protein-90 co-chaperone, Cyclophilin 40, promotes ALK-positive, anaplastic large cell lymphoma viability and its expression is regulated by the NPM-ALK oncoprotein.</title>
        <authorList>
            <person name="Pearson J.D."/>
            <person name="Mohammed Z."/>
            <person name="Bacani J.T."/>
            <person name="Lai R."/>
            <person name="Ingham R.J."/>
        </authorList>
    </citation>
    <scope>FUNCTION</scope>
</reference>
<reference key="23">
    <citation type="journal article" date="2013" name="Exp. Cell Res.">
        <title>Cyclophilin 40 alters UVA-induced apoptosis and mitochondrial ROS generation in keratinocytes.</title>
        <authorList>
            <person name="Jandova J."/>
            <person name="Janda J."/>
            <person name="Sligh J.E."/>
        </authorList>
    </citation>
    <scope>FUNCTION</scope>
</reference>
<reference key="24">
    <citation type="journal article" date="2013" name="J. Proteome Res.">
        <title>Toward a comprehensive characterization of a human cancer cell phosphoproteome.</title>
        <authorList>
            <person name="Zhou H."/>
            <person name="Di Palma S."/>
            <person name="Preisinger C."/>
            <person name="Peng M."/>
            <person name="Polat A.N."/>
            <person name="Heck A.J."/>
            <person name="Mohammed S."/>
        </authorList>
    </citation>
    <scope>PHOSPHORYLATION [LARGE SCALE ANALYSIS] AT SER-5 AND SER-198</scope>
    <scope>IDENTIFICATION BY MASS SPECTROMETRY [LARGE SCALE ANALYSIS]</scope>
    <source>
        <tissue>Cervix carcinoma</tissue>
        <tissue>Erythroleukemia</tissue>
    </source>
</reference>
<reference key="25">
    <citation type="journal article" date="2014" name="J. Proteomics">
        <title>An enzyme assisted RP-RPLC approach for in-depth analysis of human liver phosphoproteome.</title>
        <authorList>
            <person name="Bian Y."/>
            <person name="Song C."/>
            <person name="Cheng K."/>
            <person name="Dong M."/>
            <person name="Wang F."/>
            <person name="Huang J."/>
            <person name="Sun D."/>
            <person name="Wang L."/>
            <person name="Ye M."/>
            <person name="Zou H."/>
        </authorList>
    </citation>
    <scope>IDENTIFICATION BY MASS SPECTROMETRY [LARGE SCALE ANALYSIS]</scope>
    <source>
        <tissue>Liver</tissue>
    </source>
</reference>
<evidence type="ECO:0000250" key="1"/>
<evidence type="ECO:0000250" key="2">
    <source>
        <dbReference type="UniProtKB" id="Q9CR16"/>
    </source>
</evidence>
<evidence type="ECO:0000255" key="3">
    <source>
        <dbReference type="PROSITE-ProRule" id="PRU00156"/>
    </source>
</evidence>
<evidence type="ECO:0000269" key="4">
    <source>
    </source>
</evidence>
<evidence type="ECO:0000269" key="5">
    <source>
    </source>
</evidence>
<evidence type="ECO:0000269" key="6">
    <source>
    </source>
</evidence>
<evidence type="ECO:0000269" key="7">
    <source>
    </source>
</evidence>
<evidence type="ECO:0000269" key="8">
    <source>
    </source>
</evidence>
<evidence type="ECO:0000269" key="9">
    <source>
    </source>
</evidence>
<evidence type="ECO:0000269" key="10">
    <source>
    </source>
</evidence>
<evidence type="ECO:0000269" key="11">
    <source>
    </source>
</evidence>
<evidence type="ECO:0000269" key="12">
    <source>
    </source>
</evidence>
<evidence type="ECO:0000269" key="13">
    <source>
    </source>
</evidence>
<evidence type="ECO:0000269" key="14">
    <source>
    </source>
</evidence>
<evidence type="ECO:0000269" key="15">
    <source>
    </source>
</evidence>
<evidence type="ECO:0000269" key="16">
    <source>
    </source>
</evidence>
<evidence type="ECO:0000269" key="17">
    <source>
    </source>
</evidence>
<evidence type="ECO:0000269" key="18">
    <source ref="3"/>
</evidence>
<evidence type="ECO:0000303" key="19">
    <source>
    </source>
</evidence>
<evidence type="ECO:0000305" key="20"/>
<evidence type="ECO:0000305" key="21">
    <source>
    </source>
</evidence>
<evidence type="ECO:0000305" key="22">
    <source>
    </source>
</evidence>
<evidence type="ECO:0000312" key="23">
    <source>
        <dbReference type="HGNC" id="HGNC:9257"/>
    </source>
</evidence>
<evidence type="ECO:0007744" key="24">
    <source>
    </source>
</evidence>
<evidence type="ECO:0007744" key="25">
    <source>
    </source>
</evidence>
<evidence type="ECO:0007744" key="26">
    <source>
    </source>
</evidence>
<dbReference type="EC" id="5.2.1.8" evidence="4 12"/>
<dbReference type="EMBL" id="L11667">
    <property type="protein sequence ID" value="AAA35731.1"/>
    <property type="molecule type" value="mRNA"/>
</dbReference>
<dbReference type="EMBL" id="D63861">
    <property type="protein sequence ID" value="BAA09923.1"/>
    <property type="molecule type" value="Genomic_DNA"/>
</dbReference>
<dbReference type="EMBL" id="AY714221">
    <property type="protein sequence ID" value="AAT97986.1"/>
    <property type="molecule type" value="Genomic_DNA"/>
</dbReference>
<dbReference type="EMBL" id="AK313929">
    <property type="protein sequence ID" value="BAG36649.1"/>
    <property type="molecule type" value="mRNA"/>
</dbReference>
<dbReference type="EMBL" id="CH471056">
    <property type="protein sequence ID" value="EAX04853.1"/>
    <property type="molecule type" value="Genomic_DNA"/>
</dbReference>
<dbReference type="EMBL" id="BC030707">
    <property type="protein sequence ID" value="AAH30707.1"/>
    <property type="molecule type" value="mRNA"/>
</dbReference>
<dbReference type="CCDS" id="CCDS3801.1"/>
<dbReference type="PIR" id="A45981">
    <property type="entry name" value="A45981"/>
</dbReference>
<dbReference type="RefSeq" id="NP_005029.1">
    <property type="nucleotide sequence ID" value="NM_005038.3"/>
</dbReference>
<dbReference type="SMR" id="Q08752"/>
<dbReference type="BioGRID" id="111477">
    <property type="interactions" value="105"/>
</dbReference>
<dbReference type="DIP" id="DIP-34893N"/>
<dbReference type="FunCoup" id="Q08752">
    <property type="interactions" value="3836"/>
</dbReference>
<dbReference type="IntAct" id="Q08752">
    <property type="interactions" value="54"/>
</dbReference>
<dbReference type="MINT" id="Q08752"/>
<dbReference type="STRING" id="9606.ENSP00000303754"/>
<dbReference type="BindingDB" id="Q08752"/>
<dbReference type="ChEMBL" id="CHEMBL1697657"/>
<dbReference type="DrugCentral" id="Q08752"/>
<dbReference type="GuidetoPHARMACOLOGY" id="3179"/>
<dbReference type="GlyGen" id="Q08752">
    <property type="glycosylation" value="1 site, 1 O-linked glycan (1 site)"/>
</dbReference>
<dbReference type="iPTMnet" id="Q08752"/>
<dbReference type="MetOSite" id="Q08752"/>
<dbReference type="PhosphoSitePlus" id="Q08752"/>
<dbReference type="BioMuta" id="PPID"/>
<dbReference type="DMDM" id="729274"/>
<dbReference type="REPRODUCTION-2DPAGE" id="IPI00003927"/>
<dbReference type="jPOST" id="Q08752"/>
<dbReference type="MassIVE" id="Q08752"/>
<dbReference type="PaxDb" id="9606-ENSP00000303754"/>
<dbReference type="PeptideAtlas" id="Q08752"/>
<dbReference type="ProteomicsDB" id="58647"/>
<dbReference type="Pumba" id="Q08752"/>
<dbReference type="Antibodypedia" id="16935">
    <property type="antibodies" value="372 antibodies from 36 providers"/>
</dbReference>
<dbReference type="DNASU" id="5481"/>
<dbReference type="Ensembl" id="ENST00000307720.4">
    <property type="protein sequence ID" value="ENSP00000303754.3"/>
    <property type="gene ID" value="ENSG00000171497.5"/>
</dbReference>
<dbReference type="GeneID" id="5481"/>
<dbReference type="KEGG" id="hsa:5481"/>
<dbReference type="MANE-Select" id="ENST00000307720.4">
    <property type="protein sequence ID" value="ENSP00000303754.3"/>
    <property type="RefSeq nucleotide sequence ID" value="NM_005038.3"/>
    <property type="RefSeq protein sequence ID" value="NP_005029.1"/>
</dbReference>
<dbReference type="UCSC" id="uc003iqc.4">
    <property type="organism name" value="human"/>
</dbReference>
<dbReference type="AGR" id="HGNC:9257"/>
<dbReference type="CTD" id="5481"/>
<dbReference type="DisGeNET" id="5481"/>
<dbReference type="GeneCards" id="PPID"/>
<dbReference type="HGNC" id="HGNC:9257">
    <property type="gene designation" value="PPID"/>
</dbReference>
<dbReference type="HPA" id="ENSG00000171497">
    <property type="expression patterns" value="Low tissue specificity"/>
</dbReference>
<dbReference type="MIM" id="601753">
    <property type="type" value="gene"/>
</dbReference>
<dbReference type="neXtProt" id="NX_Q08752"/>
<dbReference type="OpenTargets" id="ENSG00000171497"/>
<dbReference type="PharmGKB" id="PA33582"/>
<dbReference type="VEuPathDB" id="HostDB:ENSG00000171497"/>
<dbReference type="eggNOG" id="KOG0546">
    <property type="taxonomic scope" value="Eukaryota"/>
</dbReference>
<dbReference type="GeneTree" id="ENSGT00940000154672"/>
<dbReference type="HOGENOM" id="CLU_012062_37_1_1"/>
<dbReference type="InParanoid" id="Q08752"/>
<dbReference type="OMA" id="EMEQNCN"/>
<dbReference type="OrthoDB" id="407558at2759"/>
<dbReference type="PAN-GO" id="Q08752">
    <property type="GO annotations" value="5 GO annotations based on evolutionary models"/>
</dbReference>
<dbReference type="PhylomeDB" id="Q08752"/>
<dbReference type="TreeFam" id="TF324493"/>
<dbReference type="BRENDA" id="5.2.1.8">
    <property type="organism ID" value="2681"/>
</dbReference>
<dbReference type="PathwayCommons" id="Q08752"/>
<dbReference type="Reactome" id="R-HSA-8939211">
    <property type="pathway name" value="ESR-mediated signaling"/>
</dbReference>
<dbReference type="SignaLink" id="Q08752"/>
<dbReference type="BioGRID-ORCS" id="5481">
    <property type="hits" value="17 hits in 1157 CRISPR screens"/>
</dbReference>
<dbReference type="CD-CODE" id="91857CE7">
    <property type="entry name" value="Nucleolus"/>
</dbReference>
<dbReference type="CD-CODE" id="FB4E32DD">
    <property type="entry name" value="Presynaptic clusters and postsynaptic densities"/>
</dbReference>
<dbReference type="ChiTaRS" id="PPID">
    <property type="organism name" value="human"/>
</dbReference>
<dbReference type="GeneWiki" id="PPID"/>
<dbReference type="GenomeRNAi" id="5481"/>
<dbReference type="Pharos" id="Q08752">
    <property type="development level" value="Tchem"/>
</dbReference>
<dbReference type="PRO" id="PR:Q08752"/>
<dbReference type="Proteomes" id="UP000005640">
    <property type="component" value="Chromosome 4"/>
</dbReference>
<dbReference type="RNAct" id="Q08752">
    <property type="molecule type" value="protein"/>
</dbReference>
<dbReference type="Bgee" id="ENSG00000171497">
    <property type="expression patterns" value="Expressed in right lobe of liver and 205 other cell types or tissues"/>
</dbReference>
<dbReference type="ExpressionAtlas" id="Q08752">
    <property type="expression patterns" value="baseline and differential"/>
</dbReference>
<dbReference type="GO" id="GO:0005929">
    <property type="term" value="C:cilium"/>
    <property type="evidence" value="ECO:0000314"/>
    <property type="project" value="HPA"/>
</dbReference>
<dbReference type="GO" id="GO:0005737">
    <property type="term" value="C:cytoplasm"/>
    <property type="evidence" value="ECO:0000314"/>
    <property type="project" value="UniProtKB"/>
</dbReference>
<dbReference type="GO" id="GO:0005829">
    <property type="term" value="C:cytosol"/>
    <property type="evidence" value="ECO:0000314"/>
    <property type="project" value="HPA"/>
</dbReference>
<dbReference type="GO" id="GO:0005730">
    <property type="term" value="C:nucleolus"/>
    <property type="evidence" value="ECO:0000314"/>
    <property type="project" value="UniProtKB"/>
</dbReference>
<dbReference type="GO" id="GO:0005654">
    <property type="term" value="C:nucleoplasm"/>
    <property type="evidence" value="ECO:0000314"/>
    <property type="project" value="HPA"/>
</dbReference>
<dbReference type="GO" id="GO:0005634">
    <property type="term" value="C:nucleus"/>
    <property type="evidence" value="ECO:0000314"/>
    <property type="project" value="UniProtKB"/>
</dbReference>
<dbReference type="GO" id="GO:0016018">
    <property type="term" value="F:cyclosporin A binding"/>
    <property type="evidence" value="ECO:0000318"/>
    <property type="project" value="GO_Central"/>
</dbReference>
<dbReference type="GO" id="GO:0031072">
    <property type="term" value="F:heat shock protein binding"/>
    <property type="evidence" value="ECO:0000353"/>
    <property type="project" value="UniProtKB"/>
</dbReference>
<dbReference type="GO" id="GO:0030544">
    <property type="term" value="F:Hsp70 protein binding"/>
    <property type="evidence" value="ECO:0000250"/>
    <property type="project" value="UniProtKB"/>
</dbReference>
<dbReference type="GO" id="GO:0051879">
    <property type="term" value="F:Hsp90 protein binding"/>
    <property type="evidence" value="ECO:0000314"/>
    <property type="project" value="UniProtKB"/>
</dbReference>
<dbReference type="GO" id="GO:0030331">
    <property type="term" value="F:nuclear estrogen receptor binding"/>
    <property type="evidence" value="ECO:0000250"/>
    <property type="project" value="UniProtKB"/>
</dbReference>
<dbReference type="GO" id="GO:0003755">
    <property type="term" value="F:peptidyl-prolyl cis-trans isomerase activity"/>
    <property type="evidence" value="ECO:0000314"/>
    <property type="project" value="UniProtKB"/>
</dbReference>
<dbReference type="GO" id="GO:0008134">
    <property type="term" value="F:transcription factor binding"/>
    <property type="evidence" value="ECO:0000314"/>
    <property type="project" value="UniProtKB"/>
</dbReference>
<dbReference type="GO" id="GO:0006915">
    <property type="term" value="P:apoptotic process"/>
    <property type="evidence" value="ECO:0007669"/>
    <property type="project" value="UniProtKB-KW"/>
</dbReference>
<dbReference type="GO" id="GO:0071492">
    <property type="term" value="P:cellular response to UV-A"/>
    <property type="evidence" value="ECO:0000315"/>
    <property type="project" value="UniProtKB"/>
</dbReference>
<dbReference type="GO" id="GO:0061077">
    <property type="term" value="P:chaperone-mediated protein folding"/>
    <property type="evidence" value="ECO:0000314"/>
    <property type="project" value="UniProtKB"/>
</dbReference>
<dbReference type="GO" id="GO:0034389">
    <property type="term" value="P:lipid droplet organization"/>
    <property type="evidence" value="ECO:0000315"/>
    <property type="project" value="UniProtKB"/>
</dbReference>
<dbReference type="GO" id="GO:0000122">
    <property type="term" value="P:negative regulation of transcription by RNA polymerase II"/>
    <property type="evidence" value="ECO:0000315"/>
    <property type="project" value="UniProtKB"/>
</dbReference>
<dbReference type="GO" id="GO:0043065">
    <property type="term" value="P:positive regulation of apoptotic process"/>
    <property type="evidence" value="ECO:0000315"/>
    <property type="project" value="UniProtKB"/>
</dbReference>
<dbReference type="GO" id="GO:0050714">
    <property type="term" value="P:positive regulation of protein secretion"/>
    <property type="evidence" value="ECO:0000315"/>
    <property type="project" value="UniProtKB"/>
</dbReference>
<dbReference type="GO" id="GO:0045070">
    <property type="term" value="P:positive regulation of viral genome replication"/>
    <property type="evidence" value="ECO:0000315"/>
    <property type="project" value="UniProtKB"/>
</dbReference>
<dbReference type="GO" id="GO:0006457">
    <property type="term" value="P:protein folding"/>
    <property type="evidence" value="ECO:0000250"/>
    <property type="project" value="UniProtKB"/>
</dbReference>
<dbReference type="GO" id="GO:0015031">
    <property type="term" value="P:protein transport"/>
    <property type="evidence" value="ECO:0007669"/>
    <property type="project" value="UniProtKB-KW"/>
</dbReference>
<dbReference type="GO" id="GO:0065003">
    <property type="term" value="P:protein-containing complex assembly"/>
    <property type="evidence" value="ECO:0000314"/>
    <property type="project" value="UniProtKB"/>
</dbReference>
<dbReference type="GO" id="GO:0019076">
    <property type="term" value="P:viral release from host cell"/>
    <property type="evidence" value="ECO:0000304"/>
    <property type="project" value="UniProtKB"/>
</dbReference>
<dbReference type="CDD" id="cd01926">
    <property type="entry name" value="cyclophilin_ABH_like"/>
    <property type="match status" value="1"/>
</dbReference>
<dbReference type="FunFam" id="2.40.100.10:FF:000009">
    <property type="entry name" value="Peptidyl-prolyl cis-trans isomerase D"/>
    <property type="match status" value="1"/>
</dbReference>
<dbReference type="FunFam" id="1.25.40.10:FF:000029">
    <property type="entry name" value="peptidyl-prolyl cis-trans isomerase D"/>
    <property type="match status" value="1"/>
</dbReference>
<dbReference type="Gene3D" id="2.40.100.10">
    <property type="entry name" value="Cyclophilin-like"/>
    <property type="match status" value="1"/>
</dbReference>
<dbReference type="Gene3D" id="1.25.40.10">
    <property type="entry name" value="Tetratricopeptide repeat domain"/>
    <property type="match status" value="1"/>
</dbReference>
<dbReference type="InterPro" id="IPR029000">
    <property type="entry name" value="Cyclophilin-like_dom_sf"/>
</dbReference>
<dbReference type="InterPro" id="IPR020892">
    <property type="entry name" value="Cyclophilin-type_PPIase_CS"/>
</dbReference>
<dbReference type="InterPro" id="IPR002130">
    <property type="entry name" value="Cyclophilin-type_PPIase_dom"/>
</dbReference>
<dbReference type="InterPro" id="IPR011990">
    <property type="entry name" value="TPR-like_helical_dom_sf"/>
</dbReference>
<dbReference type="InterPro" id="IPR019734">
    <property type="entry name" value="TPR_rpt"/>
</dbReference>
<dbReference type="PANTHER" id="PTHR11071">
    <property type="entry name" value="PEPTIDYL-PROLYL CIS-TRANS ISOMERASE"/>
    <property type="match status" value="1"/>
</dbReference>
<dbReference type="PANTHER" id="PTHR11071:SF561">
    <property type="entry name" value="PEPTIDYL-PROLYL CIS-TRANS ISOMERASE D-RELATED"/>
    <property type="match status" value="1"/>
</dbReference>
<dbReference type="Pfam" id="PF00160">
    <property type="entry name" value="Pro_isomerase"/>
    <property type="match status" value="1"/>
</dbReference>
<dbReference type="PRINTS" id="PR00153">
    <property type="entry name" value="CSAPPISMRASE"/>
</dbReference>
<dbReference type="SMART" id="SM00028">
    <property type="entry name" value="TPR"/>
    <property type="match status" value="3"/>
</dbReference>
<dbReference type="SUPFAM" id="SSF50891">
    <property type="entry name" value="Cyclophilin-like"/>
    <property type="match status" value="1"/>
</dbReference>
<dbReference type="SUPFAM" id="SSF48452">
    <property type="entry name" value="TPR-like"/>
    <property type="match status" value="1"/>
</dbReference>
<dbReference type="PROSITE" id="PS00170">
    <property type="entry name" value="CSA_PPIASE_1"/>
    <property type="match status" value="1"/>
</dbReference>
<dbReference type="PROSITE" id="PS50072">
    <property type="entry name" value="CSA_PPIASE_2"/>
    <property type="match status" value="1"/>
</dbReference>
<dbReference type="PROSITE" id="PS50005">
    <property type="entry name" value="TPR"/>
    <property type="match status" value="3"/>
</dbReference>
<dbReference type="PROSITE" id="PS50293">
    <property type="entry name" value="TPR_REGION"/>
    <property type="match status" value="2"/>
</dbReference>
<comment type="function">
    <text evidence="4 10 12 15 16 17">PPIase that catalyzes the cis-trans isomerization of proline imidic peptide bonds in oligopeptides and may therefore assist protein folding (PubMed:11350175, PubMed:20676357). Proposed to act as a co-chaperone in HSP90 complexes such as in unligated steroid receptors heterocomplexes. Different co-chaperones seem to compete for association with HSP90 thus establishing distinct HSP90-co-chaperone-receptor complexes with the potential to exert tissue-specific receptor activity control. May have a preference for estrogen receptor complexes and is not found in glucocorticoid receptor complexes. May be involved in cytoplasmic dynein-dependent movement of the receptor from the cytoplasm to the nucleus. May regulate MYB by inhibiting its DNA-binding activity. Involved in regulation of AHR signaling by promoting the formation of the AHR:ARNT dimer; the function is independent of HSP90 but requires the chaperone activity. Involved in regulation of UV radiation-induced apoptosis. Promotes cell viability in anaplastic lymphoma kinase-positive anaplastic large-cell lymphoma (ALK+ ALCL) cell lines.</text>
</comment>
<comment type="function">
    <text evidence="11 14">(Microbial infection) May be involved in hepatitis C virus (HCV) replication and release.</text>
</comment>
<comment type="catalytic activity">
    <reaction evidence="4 12">
        <text>[protein]-peptidylproline (omega=180) = [protein]-peptidylproline (omega=0)</text>
        <dbReference type="Rhea" id="RHEA:16237"/>
        <dbReference type="Rhea" id="RHEA-COMP:10747"/>
        <dbReference type="Rhea" id="RHEA-COMP:10748"/>
        <dbReference type="ChEBI" id="CHEBI:83833"/>
        <dbReference type="ChEBI" id="CHEBI:83834"/>
        <dbReference type="EC" id="5.2.1.8"/>
    </reaction>
</comment>
<comment type="activity regulation">
    <text evidence="12">Less sensitive to inhibition by cyclosporin A than is CYP-18.</text>
</comment>
<comment type="subunit">
    <text evidence="4 6 8 9 13 17">Identified in ESR1 or NR3C1/GCR steroid receptor-chaperone complexes. Found in HSP90 chaperone complexes with kinase clients LCK or EIF2AK1. Two monomers associate with one HSP90 homodimer. Interacts with HSP90AA1. Interacts with HSP90AB1; PPID and FKBP4 compete for binding to HSP90AB1 and the interaction is mutually exclusive with the PPID:HSPA8 interaction. Interacts with HSPA8; PPID and STIP1 but not FKBP4 compete for binding to HSPA8 and the interaction is mutually exclusive with the PPID:HSP90AB1 interaction. Interacts with S100A1 and S100A2; the interactions dissociate the PPID:HSP90AA1 interaction. Interacts with S100A6. Interacts with MYB, ILF2, XRCC6, RACK1 and RPS3. Interacts with cytoplasmic dynein 1 intermediate chain (DYNC1I1 or DYNC1I2).</text>
</comment>
<comment type="interaction">
    <interactant intactId="EBI-716596">
        <id>Q08752</id>
    </interactant>
    <interactant intactId="EBI-821758">
        <id>PRO_0000000092</id>
        <label>APP</label>
        <dbReference type="UniProtKB" id="P05067"/>
    </interactant>
    <organismsDiffer>false</organismsDiffer>
    <experiments>4</experiments>
</comment>
<comment type="interaction">
    <interactant intactId="EBI-716596">
        <id>Q08752</id>
    </interactant>
    <interactant intactId="EBI-2431589">
        <id>PRO_0000000093</id>
        <label>APP</label>
        <dbReference type="UniProtKB" id="P05067"/>
    </interactant>
    <organismsDiffer>false</organismsDiffer>
    <experiments>2</experiments>
</comment>
<comment type="interaction">
    <interactant intactId="EBI-716596">
        <id>Q08752</id>
    </interactant>
    <interactant intactId="EBI-355815">
        <id>P48047</id>
        <label>ATP5PO</label>
    </interactant>
    <organismsDiffer>false</organismsDiffer>
    <experiments>3</experiments>
</comment>
<comment type="interaction">
    <interactant intactId="EBI-716596">
        <id>Q08752</id>
    </interactant>
    <interactant intactId="EBI-357925">
        <id>Q12905</id>
        <label>ILF2</label>
    </interactant>
    <organismsDiffer>false</organismsDiffer>
    <experiments>4</experiments>
</comment>
<comment type="interaction">
    <interactant intactId="EBI-716596">
        <id>Q08752</id>
    </interactant>
    <interactant intactId="EBI-296739">
        <id>P63244</id>
        <label>RACK1</label>
    </interactant>
    <organismsDiffer>false</organismsDiffer>
    <experiments>4</experiments>
</comment>
<comment type="interaction">
    <interactant intactId="EBI-716596">
        <id>Q08752</id>
    </interactant>
    <interactant intactId="EBI-351193">
        <id>P23396</id>
        <label>RPS3</label>
    </interactant>
    <organismsDiffer>false</organismsDiffer>
    <experiments>4</experiments>
</comment>
<comment type="interaction">
    <interactant intactId="EBI-716596">
        <id>Q08752</id>
    </interactant>
    <interactant intactId="EBI-2871776">
        <id>P06132</id>
        <label>UROD</label>
    </interactant>
    <organismsDiffer>false</organismsDiffer>
    <experiments>2</experiments>
</comment>
<comment type="interaction">
    <interactant intactId="EBI-716596">
        <id>Q08752</id>
    </interactant>
    <interactant intactId="EBI-353208">
        <id>P12956</id>
        <label>XRCC6</label>
    </interactant>
    <organismsDiffer>false</organismsDiffer>
    <experiments>4</experiments>
</comment>
<comment type="interaction">
    <interactant intactId="EBI-716596">
        <id>Q08752</id>
    </interactant>
    <interactant intactId="EBI-6502562">
        <id>P01103</id>
        <label>MYB</label>
    </interactant>
    <organismsDiffer>true</organismsDiffer>
    <experiments>2</experiments>
</comment>
<comment type="subcellular location">
    <subcellularLocation>
        <location evidence="5 10">Cytoplasm</location>
    </subcellularLocation>
    <subcellularLocation>
        <location evidence="5 10">Nucleus</location>
        <location evidence="5 10">Nucleolus</location>
    </subcellularLocation>
    <subcellularLocation>
        <location evidence="5 10">Nucleus</location>
        <location evidence="5 10">Nucleoplasm</location>
    </subcellularLocation>
</comment>
<comment type="tissue specificity">
    <text>Widely expressed.</text>
</comment>
<comment type="similarity">
    <text evidence="20">Belongs to the cyclophilin-type PPIase family. PPIase D subfamily.</text>
</comment>
<comment type="caution">
    <text evidence="20">This protein should not be confused with mitochondrial peptidyl-prolyl cis-trans isomerase F (PPIF) which is often referred to as cyclophilin D or CypD.</text>
</comment>
<comment type="online information" name="Wikipedia">
    <link uri="https://en.wikipedia.org/wiki/Cyclophilin"/>
    <text>Cyclophilin entry</text>
</comment>
<protein>
    <recommendedName>
        <fullName evidence="21 22">Peptidyl-prolyl cis-trans isomerase D</fullName>
        <shortName evidence="21 22">PPIase D</shortName>
        <ecNumber evidence="4 12">5.2.1.8</ecNumber>
    </recommendedName>
    <alternativeName>
        <fullName>40 kDa peptidyl-prolyl cis-trans isomerase</fullName>
    </alternativeName>
    <alternativeName>
        <fullName evidence="19">Cyclophilin-40</fullName>
        <shortName evidence="19">CYP-40</shortName>
    </alternativeName>
    <alternativeName>
        <fullName>Cyclophilin-related protein</fullName>
    </alternativeName>
    <alternativeName>
        <fullName evidence="21 22">Rotamase D</fullName>
    </alternativeName>
</protein>
<accession>Q08752</accession>
<accession>B2R9V2</accession>
<sequence length="370" mass="40764">MSHPSPQAKPSNPSNPRVFFDVDIGGERVGRIVLELFADIVPKTAENFRALCTGEKGIGHTTGKPLHFKGCPFHRIIKKFMIQGGDFSNQNGTGGESIYGEKFEDENFHYKHDREGLLSMANAGRNTNGSQFFITTVPTPHLDGKHVVFGQVIKGIGVARILENVEVKGEKPAKLCVIAECGELKEGDDGGIFPKDGSGDSHPDFPEDADIDLKDVDKILLITEDLKNIGNTFFKSQNWEMAIKKYAEVLRYVDSSKAVIETADRAKLQPIALSCVLNIGACKLKMSNWQGAIDSCLEALELDPSNTKALYRRAQGWQGLKEYDQALADLKKAQGIAPEDKAIQAELLKVKQKIKAQKDKEKAVYAKMFA</sequence>
<organism>
    <name type="scientific">Homo sapiens</name>
    <name type="common">Human</name>
    <dbReference type="NCBI Taxonomy" id="9606"/>
    <lineage>
        <taxon>Eukaryota</taxon>
        <taxon>Metazoa</taxon>
        <taxon>Chordata</taxon>
        <taxon>Craniata</taxon>
        <taxon>Vertebrata</taxon>
        <taxon>Euteleostomi</taxon>
        <taxon>Mammalia</taxon>
        <taxon>Eutheria</taxon>
        <taxon>Euarchontoglires</taxon>
        <taxon>Primates</taxon>
        <taxon>Haplorrhini</taxon>
        <taxon>Catarrhini</taxon>
        <taxon>Hominidae</taxon>
        <taxon>Homo</taxon>
    </lineage>
</organism>
<proteinExistence type="evidence at protein level"/>
<keyword id="KW-0007">Acetylation</keyword>
<keyword id="KW-0053">Apoptosis</keyword>
<keyword id="KW-0143">Chaperone</keyword>
<keyword id="KW-0963">Cytoplasm</keyword>
<keyword id="KW-0903">Direct protein sequencing</keyword>
<keyword id="KW-0945">Host-virus interaction</keyword>
<keyword id="KW-0413">Isomerase</keyword>
<keyword id="KW-0539">Nucleus</keyword>
<keyword id="KW-0597">Phosphoprotein</keyword>
<keyword id="KW-0653">Protein transport</keyword>
<keyword id="KW-1267">Proteomics identification</keyword>
<keyword id="KW-1185">Reference proteome</keyword>
<keyword id="KW-0677">Repeat</keyword>
<keyword id="KW-0697">Rotamase</keyword>
<keyword id="KW-0802">TPR repeat</keyword>
<keyword id="KW-0813">Transport</keyword>
<feature type="initiator methionine" description="Removed" evidence="7">
    <location>
        <position position="1"/>
    </location>
</feature>
<feature type="chain" id="PRO_0000064153" description="Peptidyl-prolyl cis-trans isomerase D">
    <location>
        <begin position="2"/>
        <end position="370"/>
    </location>
</feature>
<feature type="domain" description="PPIase cyclophilin-type" evidence="3">
    <location>
        <begin position="19"/>
        <end position="183"/>
    </location>
</feature>
<feature type="repeat" description="TPR 1">
    <location>
        <begin position="223"/>
        <end position="256"/>
    </location>
</feature>
<feature type="repeat" description="TPR 2">
    <location>
        <begin position="273"/>
        <end position="306"/>
    </location>
</feature>
<feature type="repeat" description="TPR 3">
    <location>
        <begin position="307"/>
        <end position="340"/>
    </location>
</feature>
<feature type="region of interest" description="Chaperone activity" evidence="1">
    <location>
        <begin position="185"/>
        <end position="215"/>
    </location>
</feature>
<feature type="region of interest" description="Interaction with HSP90AB1" evidence="1">
    <location>
        <begin position="214"/>
        <end position="370"/>
    </location>
</feature>
<feature type="modified residue" description="Phosphoserine" evidence="26">
    <location>
        <position position="5"/>
    </location>
</feature>
<feature type="modified residue" description="N6-acetyllysine" evidence="2">
    <location>
        <position position="171"/>
    </location>
</feature>
<feature type="modified residue" description="Phosphoserine" evidence="24 25 26">
    <location>
        <position position="198"/>
    </location>
</feature>
<feature type="sequence variant" id="VAR_021021" description="In dbSNP:rs2070631." evidence="18">
    <original>R</original>
    <variation>C</variation>
    <location>
        <position position="49"/>
    </location>
</feature>
<feature type="sequence variant" id="VAR_051771" description="In dbSNP:rs2230222.">
    <original>D</original>
    <variation>V</variation>
    <location>
        <position position="196"/>
    </location>
</feature>
<feature type="sequence variant" id="VAR_021022" description="In dbSNP:rs9410." evidence="18">
    <original>L</original>
    <variation>I</variation>
    <location>
        <position position="302"/>
    </location>
</feature>
<feature type="sequence variant" id="VAR_021023" description="In dbSNP:rs17843956." evidence="18">
    <original>G</original>
    <variation>E</variation>
    <location>
        <position position="335"/>
    </location>
</feature>
<feature type="mutagenesis site" description="Abolishes interaction with HSP90AB1 and impairs interaction with HSPA8." evidence="6 9">
    <original>K</original>
    <variation>A</variation>
    <location>
        <position position="227"/>
    </location>
</feature>
<feature type="mutagenesis site" description="Abolishes interaction with HSP90AB1 and impairs interaction with HSPA8." evidence="6 9">
    <original>N</original>
    <variation>A</variation>
    <location>
        <position position="231"/>
    </location>
</feature>
<feature type="mutagenesis site" description="Impairs interaction with HSP90AB1 and HSPA8." evidence="6 9">
    <original>F</original>
    <variation>A</variation>
    <location>
        <position position="234"/>
    </location>
</feature>
<feature type="mutagenesis site" description="Impairs interaction with HSP90AB1 and HSPA8." evidence="6 9">
    <original>S</original>
    <variation>L</variation>
    <location>
        <position position="274"/>
    </location>
</feature>
<feature type="mutagenesis site" description="Abolishes interaction with HSP90AB1." evidence="6 9">
    <original>N</original>
    <variation>A</variation>
    <location>
        <position position="278"/>
    </location>
</feature>
<feature type="mutagenesis site" description="Impairs interaction with HSP90AB1 and HSPA8." evidence="6 9">
    <original>L</original>
    <variation>A</variation>
    <location>
        <position position="284"/>
    </location>
</feature>
<feature type="mutagenesis site" description="Impairs interaction with HSP90AB1 and HSPA8." evidence="6 9">
    <original>K</original>
    <variation>A</variation>
    <location>
        <position position="285"/>
    </location>
</feature>
<feature type="mutagenesis site" description="Abolishes interaction with HSP90AB1 and impairs interaction with HSPA8." evidence="6 9">
    <original>K</original>
    <variation>A</variation>
    <location>
        <position position="308"/>
    </location>
</feature>
<feature type="mutagenesis site" description="Abolishes interaction with HSP90AB1 and impairs interaction with HSPA8." evidence="6 9">
    <original>R</original>
    <variation>A</variation>
    <location>
        <position position="312"/>
    </location>
</feature>
<feature type="mutagenesis site" description="Impairs interaction with HSP90AB1." evidence="6">
    <original>D</original>
    <variation>A</variation>
    <location>
        <position position="329"/>
    </location>
</feature>